<accession>B7MLB4</accession>
<evidence type="ECO:0000255" key="1">
    <source>
        <dbReference type="HAMAP-Rule" id="MF_01104"/>
    </source>
</evidence>
<reference key="1">
    <citation type="journal article" date="2009" name="PLoS Genet.">
        <title>Organised genome dynamics in the Escherichia coli species results in highly diverse adaptive paths.</title>
        <authorList>
            <person name="Touchon M."/>
            <person name="Hoede C."/>
            <person name="Tenaillon O."/>
            <person name="Barbe V."/>
            <person name="Baeriswyl S."/>
            <person name="Bidet P."/>
            <person name="Bingen E."/>
            <person name="Bonacorsi S."/>
            <person name="Bouchier C."/>
            <person name="Bouvet O."/>
            <person name="Calteau A."/>
            <person name="Chiapello H."/>
            <person name="Clermont O."/>
            <person name="Cruveiller S."/>
            <person name="Danchin A."/>
            <person name="Diard M."/>
            <person name="Dossat C."/>
            <person name="Karoui M.E."/>
            <person name="Frapy E."/>
            <person name="Garry L."/>
            <person name="Ghigo J.M."/>
            <person name="Gilles A.M."/>
            <person name="Johnson J."/>
            <person name="Le Bouguenec C."/>
            <person name="Lescat M."/>
            <person name="Mangenot S."/>
            <person name="Martinez-Jehanne V."/>
            <person name="Matic I."/>
            <person name="Nassif X."/>
            <person name="Oztas S."/>
            <person name="Petit M.A."/>
            <person name="Pichon C."/>
            <person name="Rouy Z."/>
            <person name="Ruf C.S."/>
            <person name="Schneider D."/>
            <person name="Tourret J."/>
            <person name="Vacherie B."/>
            <person name="Vallenet D."/>
            <person name="Medigue C."/>
            <person name="Rocha E.P.C."/>
            <person name="Denamur E."/>
        </authorList>
    </citation>
    <scope>NUCLEOTIDE SEQUENCE [LARGE SCALE GENOMIC DNA]</scope>
    <source>
        <strain>S88 / ExPEC</strain>
    </source>
</reference>
<keyword id="KW-0997">Cell inner membrane</keyword>
<keyword id="KW-1003">Cell membrane</keyword>
<keyword id="KW-0472">Membrane</keyword>
<keyword id="KW-1185">Reference proteome</keyword>
<proteinExistence type="inferred from homology"/>
<name>SYDP_ECO45</name>
<sequence>MDDLTAQALKDFTARYCDAWHEEHKSWPLSEELYGVPSPCIISTTEDAVYWQPQPFTGEQNVNAVERAFDIVIQPTIHTFYTTQFAGDMHAQFGDIKLTLLQTWSEDDFRRVQENLIGHLVTQKRLKLPPTLFIATLEEELEVISVCNLSGEVCKETLGTRKRTHLASNLAEFLNQLKPLL</sequence>
<gene>
    <name evidence="1" type="primary">syd</name>
    <name type="ordered locus">ECS88_3062</name>
</gene>
<dbReference type="EMBL" id="CU928161">
    <property type="protein sequence ID" value="CAR04303.1"/>
    <property type="molecule type" value="Genomic_DNA"/>
</dbReference>
<dbReference type="RefSeq" id="WP_000342431.1">
    <property type="nucleotide sequence ID" value="NC_011742.1"/>
</dbReference>
<dbReference type="SMR" id="B7MLB4"/>
<dbReference type="GeneID" id="93779205"/>
<dbReference type="KEGG" id="ecz:ECS88_3062"/>
<dbReference type="HOGENOM" id="CLU_121866_0_0_6"/>
<dbReference type="Proteomes" id="UP000000747">
    <property type="component" value="Chromosome"/>
</dbReference>
<dbReference type="GO" id="GO:0009898">
    <property type="term" value="C:cytoplasmic side of plasma membrane"/>
    <property type="evidence" value="ECO:0007669"/>
    <property type="project" value="InterPro"/>
</dbReference>
<dbReference type="CDD" id="cd16323">
    <property type="entry name" value="Syd"/>
    <property type="match status" value="1"/>
</dbReference>
<dbReference type="FunFam" id="3.40.1580.20:FF:000001">
    <property type="entry name" value="Protein Syd"/>
    <property type="match status" value="1"/>
</dbReference>
<dbReference type="Gene3D" id="3.40.1580.20">
    <property type="entry name" value="Syd protein"/>
    <property type="match status" value="1"/>
</dbReference>
<dbReference type="HAMAP" id="MF_01104">
    <property type="entry name" value="Syd"/>
    <property type="match status" value="1"/>
</dbReference>
<dbReference type="InterPro" id="IPR009948">
    <property type="entry name" value="Syd"/>
</dbReference>
<dbReference type="InterPro" id="IPR038228">
    <property type="entry name" value="Syd_sf"/>
</dbReference>
<dbReference type="NCBIfam" id="NF003439">
    <property type="entry name" value="PRK04968.1"/>
    <property type="match status" value="1"/>
</dbReference>
<dbReference type="Pfam" id="PF07348">
    <property type="entry name" value="Syd"/>
    <property type="match status" value="1"/>
</dbReference>
<protein>
    <recommendedName>
        <fullName evidence="1">Protein Syd</fullName>
    </recommendedName>
</protein>
<comment type="function">
    <text evidence="1">Interacts with the SecY protein in vivo. May bind preferentially to an uncomplexed state of SecY, thus functioning either as a chelating agent for excess SecY in the cell or as a regulatory factor that negatively controls the translocase function.</text>
</comment>
<comment type="subcellular location">
    <subcellularLocation>
        <location evidence="1">Cell inner membrane</location>
        <topology evidence="1">Peripheral membrane protein</topology>
        <orientation evidence="1">Cytoplasmic side</orientation>
    </subcellularLocation>
    <text evidence="1">Loosely associated with the cytoplasmic side of the inner membrane, probably via SecY.</text>
</comment>
<comment type="similarity">
    <text evidence="1">Belongs to the Syd family.</text>
</comment>
<organism>
    <name type="scientific">Escherichia coli O45:K1 (strain S88 / ExPEC)</name>
    <dbReference type="NCBI Taxonomy" id="585035"/>
    <lineage>
        <taxon>Bacteria</taxon>
        <taxon>Pseudomonadati</taxon>
        <taxon>Pseudomonadota</taxon>
        <taxon>Gammaproteobacteria</taxon>
        <taxon>Enterobacterales</taxon>
        <taxon>Enterobacteriaceae</taxon>
        <taxon>Escherichia</taxon>
    </lineage>
</organism>
<feature type="chain" id="PRO_1000137024" description="Protein Syd">
    <location>
        <begin position="1"/>
        <end position="181"/>
    </location>
</feature>